<reference key="1">
    <citation type="journal article" date="2001" name="Nature">
        <title>Complete genome sequence of a multiple drug resistant Salmonella enterica serovar Typhi CT18.</title>
        <authorList>
            <person name="Parkhill J."/>
            <person name="Dougan G."/>
            <person name="James K.D."/>
            <person name="Thomson N.R."/>
            <person name="Pickard D."/>
            <person name="Wain J."/>
            <person name="Churcher C.M."/>
            <person name="Mungall K.L."/>
            <person name="Bentley S.D."/>
            <person name="Holden M.T.G."/>
            <person name="Sebaihia M."/>
            <person name="Baker S."/>
            <person name="Basham D."/>
            <person name="Brooks K."/>
            <person name="Chillingworth T."/>
            <person name="Connerton P."/>
            <person name="Cronin A."/>
            <person name="Davis P."/>
            <person name="Davies R.M."/>
            <person name="Dowd L."/>
            <person name="White N."/>
            <person name="Farrar J."/>
            <person name="Feltwell T."/>
            <person name="Hamlin N."/>
            <person name="Haque A."/>
            <person name="Hien T.T."/>
            <person name="Holroyd S."/>
            <person name="Jagels K."/>
            <person name="Krogh A."/>
            <person name="Larsen T.S."/>
            <person name="Leather S."/>
            <person name="Moule S."/>
            <person name="O'Gaora P."/>
            <person name="Parry C."/>
            <person name="Quail M.A."/>
            <person name="Rutherford K.M."/>
            <person name="Simmonds M."/>
            <person name="Skelton J."/>
            <person name="Stevens K."/>
            <person name="Whitehead S."/>
            <person name="Barrell B.G."/>
        </authorList>
    </citation>
    <scope>NUCLEOTIDE SEQUENCE [LARGE SCALE GENOMIC DNA]</scope>
    <source>
        <strain>CT18</strain>
    </source>
</reference>
<reference key="2">
    <citation type="journal article" date="2003" name="J. Bacteriol.">
        <title>Comparative genomics of Salmonella enterica serovar Typhi strains Ty2 and CT18.</title>
        <authorList>
            <person name="Deng W."/>
            <person name="Liou S.-R."/>
            <person name="Plunkett G. III"/>
            <person name="Mayhew G.F."/>
            <person name="Rose D.J."/>
            <person name="Burland V."/>
            <person name="Kodoyianni V."/>
            <person name="Schwartz D.C."/>
            <person name="Blattner F.R."/>
        </authorList>
    </citation>
    <scope>NUCLEOTIDE SEQUENCE [LARGE SCALE GENOMIC DNA]</scope>
    <source>
        <strain>ATCC 700931 / Ty2</strain>
    </source>
</reference>
<protein>
    <recommendedName>
        <fullName evidence="2">Trehalose-6-phosphate synthase</fullName>
        <shortName evidence="2">TPS</shortName>
        <ecNumber evidence="2">2.4.1.15</ecNumber>
    </recommendedName>
    <alternativeName>
        <fullName evidence="2">Alpha,alpha-trehalose-phosphate synthase [UDP-forming]</fullName>
    </alternativeName>
    <alternativeName>
        <fullName evidence="2">Osmoregulatory trehalose synthesis protein A</fullName>
        <shortName evidence="2">OtsA</shortName>
    </alternativeName>
    <alternativeName>
        <fullName evidence="2">UDP-glucose-glucosephosphate glucosyltransferase</fullName>
    </alternativeName>
</protein>
<name>OTSA_SALTI</name>
<sequence length="473" mass="53581">MSRLVVVSNRIAPPDNKGGAGGLAVGVLGALKAAGGLWFGWSGETGNEDEPLKKVTKGNITWASFNLSEQDYEDYYCQFSNAVLWPAFHYRLDLVQFQRPAWEGYMRVNALLADKLLPLIKENDIIWVHDYHLLPFASELRKRGVNNRIGFFLHIPFPTPEIFNALPPHDELLEQLCDFDLLGFQTENDRLAFLDSLSSQTRVTTRSGKQHIAWGKDFQTEVYPIGIEPDEIALQAAGPLPPKLAQLKAELKNVKNIFSVERLDYSKGLPERFLAYEALLENYPQHRGKIRYTQIAPTSRGEVQAYQDIRHQLETEAGRINGKYGQLGWTPLYYLNQHFDRKLLMKIFRYSDVGLVTPLRDGMNLVAKEFVAAQDPANPGVLVLSQFAGAANELTSALIVNPYDRDDVAAALNRALTMPLAERISRHAEMLDVIVKNDINRWQERFIHDLKEVTPRSPERQQQNNVATFPKLA</sequence>
<evidence type="ECO:0000250" key="1"/>
<evidence type="ECO:0000250" key="2">
    <source>
        <dbReference type="UniProtKB" id="P31677"/>
    </source>
</evidence>
<evidence type="ECO:0000256" key="3">
    <source>
        <dbReference type="SAM" id="MobiDB-lite"/>
    </source>
</evidence>
<proteinExistence type="inferred from homology"/>
<organism>
    <name type="scientific">Salmonella typhi</name>
    <dbReference type="NCBI Taxonomy" id="90370"/>
    <lineage>
        <taxon>Bacteria</taxon>
        <taxon>Pseudomonadati</taxon>
        <taxon>Pseudomonadota</taxon>
        <taxon>Gammaproteobacteria</taxon>
        <taxon>Enterobacterales</taxon>
        <taxon>Enterobacteriaceae</taxon>
        <taxon>Salmonella</taxon>
    </lineage>
</organism>
<comment type="function">
    <text evidence="2">Probably involved in the osmoprotection via the biosynthesis of trehalose. Catalyzes the transfer of glucose from UDP-alpha-D-glucose (UDP-Glc) to D-glucose 6-phosphate (Glc-6-P) to form trehalose-6-phosphate. Acts with retention of the anomeric configuration of the UDP-sugar donor.</text>
</comment>
<comment type="catalytic activity">
    <reaction evidence="2">
        <text>D-glucose 6-phosphate + UDP-alpha-D-glucose = alpha,alpha-trehalose 6-phosphate + UDP + H(+)</text>
        <dbReference type="Rhea" id="RHEA:18889"/>
        <dbReference type="ChEBI" id="CHEBI:15378"/>
        <dbReference type="ChEBI" id="CHEBI:58223"/>
        <dbReference type="ChEBI" id="CHEBI:58429"/>
        <dbReference type="ChEBI" id="CHEBI:58885"/>
        <dbReference type="ChEBI" id="CHEBI:61548"/>
        <dbReference type="EC" id="2.4.1.15"/>
    </reaction>
</comment>
<comment type="pathway">
    <text evidence="2">Glycan biosynthesis; trehalose biosynthesis.</text>
</comment>
<comment type="subunit">
    <text evidence="2">Homotetramer.</text>
</comment>
<comment type="similarity">
    <text evidence="2">Belongs to the glycosyltransferase 20 family.</text>
</comment>
<accession>P0A1Q1</accession>
<accession>Q9L893</accession>
<dbReference type="EC" id="2.4.1.15" evidence="2"/>
<dbReference type="EMBL" id="AL513382">
    <property type="protein sequence ID" value="CAD05679.1"/>
    <property type="molecule type" value="Genomic_DNA"/>
</dbReference>
<dbReference type="EMBL" id="AE014613">
    <property type="protein sequence ID" value="AAO68622.1"/>
    <property type="molecule type" value="Genomic_DNA"/>
</dbReference>
<dbReference type="RefSeq" id="NP_456494.1">
    <property type="nucleotide sequence ID" value="NC_003198.1"/>
</dbReference>
<dbReference type="RefSeq" id="WP_000089042.1">
    <property type="nucleotide sequence ID" value="NZ_WSUR01000004.1"/>
</dbReference>
<dbReference type="SMR" id="P0A1Q1"/>
<dbReference type="STRING" id="220341.gene:17586044"/>
<dbReference type="KEGG" id="stt:t0949"/>
<dbReference type="KEGG" id="sty:STY2137"/>
<dbReference type="PATRIC" id="fig|220341.7.peg.2149"/>
<dbReference type="eggNOG" id="COG0380">
    <property type="taxonomic scope" value="Bacteria"/>
</dbReference>
<dbReference type="HOGENOM" id="CLU_002351_7_1_6"/>
<dbReference type="OMA" id="NRTIWPL"/>
<dbReference type="OrthoDB" id="9815690at2"/>
<dbReference type="UniPathway" id="UPA00299"/>
<dbReference type="Proteomes" id="UP000000541">
    <property type="component" value="Chromosome"/>
</dbReference>
<dbReference type="Proteomes" id="UP000002670">
    <property type="component" value="Chromosome"/>
</dbReference>
<dbReference type="GO" id="GO:0003825">
    <property type="term" value="F:alpha,alpha-trehalose-phosphate synthase (UDP-forming) activity"/>
    <property type="evidence" value="ECO:0007669"/>
    <property type="project" value="UniProtKB-EC"/>
</dbReference>
<dbReference type="GO" id="GO:0005992">
    <property type="term" value="P:trehalose biosynthetic process"/>
    <property type="evidence" value="ECO:0007669"/>
    <property type="project" value="UniProtKB-UniPathway"/>
</dbReference>
<dbReference type="CDD" id="cd03788">
    <property type="entry name" value="GT20_TPS"/>
    <property type="match status" value="1"/>
</dbReference>
<dbReference type="FunFam" id="3.40.50.2000:FF:000024">
    <property type="entry name" value="Trehalose-6-phosphate synthase"/>
    <property type="match status" value="1"/>
</dbReference>
<dbReference type="Gene3D" id="3.40.50.2000">
    <property type="entry name" value="Glycogen Phosphorylase B"/>
    <property type="match status" value="2"/>
</dbReference>
<dbReference type="InterPro" id="IPR001830">
    <property type="entry name" value="Glyco_trans_20"/>
</dbReference>
<dbReference type="InterPro" id="IPR012766">
    <property type="entry name" value="Trehalose_OtsA"/>
</dbReference>
<dbReference type="NCBIfam" id="NF007513">
    <property type="entry name" value="PRK10117.1"/>
    <property type="match status" value="1"/>
</dbReference>
<dbReference type="NCBIfam" id="TIGR02400">
    <property type="entry name" value="trehalose_OtsA"/>
    <property type="match status" value="1"/>
</dbReference>
<dbReference type="PANTHER" id="PTHR10788:SF106">
    <property type="entry name" value="BCDNA.GH08860"/>
    <property type="match status" value="1"/>
</dbReference>
<dbReference type="PANTHER" id="PTHR10788">
    <property type="entry name" value="TREHALOSE-6-PHOSPHATE SYNTHASE"/>
    <property type="match status" value="1"/>
</dbReference>
<dbReference type="Pfam" id="PF00982">
    <property type="entry name" value="Glyco_transf_20"/>
    <property type="match status" value="1"/>
</dbReference>
<dbReference type="SUPFAM" id="SSF53756">
    <property type="entry name" value="UDP-Glycosyltransferase/glycogen phosphorylase"/>
    <property type="match status" value="1"/>
</dbReference>
<gene>
    <name evidence="2" type="primary">otsA</name>
    <name type="ordered locus">STY2137</name>
    <name type="ordered locus">t0949</name>
</gene>
<feature type="initiator methionine" description="Removed" evidence="1">
    <location>
        <position position="1"/>
    </location>
</feature>
<feature type="chain" id="PRO_0000122492" description="Trehalose-6-phosphate synthase">
    <location>
        <begin position="2"/>
        <end position="473"/>
    </location>
</feature>
<feature type="region of interest" description="Disordered" evidence="3">
    <location>
        <begin position="454"/>
        <end position="473"/>
    </location>
</feature>
<feature type="binding site" evidence="2">
    <location>
        <position position="10"/>
    </location>
    <ligand>
        <name>D-glucose 6-phosphate</name>
        <dbReference type="ChEBI" id="CHEBI:61548"/>
    </ligand>
</feature>
<feature type="binding site" evidence="2">
    <location>
        <begin position="21"/>
        <end position="22"/>
    </location>
    <ligand>
        <name>UDP-alpha-D-glucose</name>
        <dbReference type="ChEBI" id="CHEBI:58885"/>
    </ligand>
</feature>
<feature type="binding site" evidence="2">
    <location>
        <position position="76"/>
    </location>
    <ligand>
        <name>D-glucose 6-phosphate</name>
        <dbReference type="ChEBI" id="CHEBI:61548"/>
    </ligand>
</feature>
<feature type="binding site" evidence="2">
    <location>
        <position position="130"/>
    </location>
    <ligand>
        <name>D-glucose 6-phosphate</name>
        <dbReference type="ChEBI" id="CHEBI:61548"/>
    </ligand>
</feature>
<feature type="binding site" evidence="2">
    <location>
        <position position="262"/>
    </location>
    <ligand>
        <name>UDP-alpha-D-glucose</name>
        <dbReference type="ChEBI" id="CHEBI:58885"/>
    </ligand>
</feature>
<feature type="binding site" evidence="2">
    <location>
        <position position="267"/>
    </location>
    <ligand>
        <name>UDP-alpha-D-glucose</name>
        <dbReference type="ChEBI" id="CHEBI:58885"/>
    </ligand>
</feature>
<feature type="binding site" evidence="2">
    <location>
        <position position="300"/>
    </location>
    <ligand>
        <name>D-glucose 6-phosphate</name>
        <dbReference type="ChEBI" id="CHEBI:61548"/>
    </ligand>
</feature>
<feature type="binding site" evidence="2">
    <location>
        <position position="339"/>
    </location>
    <ligand>
        <name>UDP-alpha-D-glucose</name>
        <dbReference type="ChEBI" id="CHEBI:58885"/>
    </ligand>
</feature>
<feature type="binding site" evidence="2">
    <location>
        <begin position="365"/>
        <end position="369"/>
    </location>
    <ligand>
        <name>UDP-alpha-D-glucose</name>
        <dbReference type="ChEBI" id="CHEBI:58885"/>
    </ligand>
</feature>
<feature type="site" description="Involved in alpha anomer selectivity" evidence="2">
    <location>
        <position position="85"/>
    </location>
</feature>
<feature type="site" description="Involved in alpha anomer selectivity" evidence="2">
    <location>
        <position position="155"/>
    </location>
</feature>
<keyword id="KW-0328">Glycosyltransferase</keyword>
<keyword id="KW-0808">Transferase</keyword>